<reference key="1">
    <citation type="journal article" date="2002" name="J. Gen. Virol.">
        <title>The sequence of camelpox virus shows it is most closely related to variola virus, the cause of smallpox.</title>
        <authorList>
            <person name="Gubser C."/>
            <person name="Smith G.L."/>
        </authorList>
    </citation>
    <scope>NUCLEOTIDE SEQUENCE [LARGE SCALE GENOMIC DNA]</scope>
</reference>
<protein>
    <recommendedName>
        <fullName>Envelope protein OPG155</fullName>
    </recommendedName>
    <alternativeName>
        <fullName>Protein CMP145</fullName>
    </alternativeName>
</protein>
<gene>
    <name type="primary">OPG155</name>
    <name type="ordered locus">CMP145L</name>
</gene>
<organismHost>
    <name type="scientific">Camelus</name>
    <dbReference type="NCBI Taxonomy" id="9836"/>
</organismHost>
<proteinExistence type="inferred from homology"/>
<sequence>MNSLSIFFIVVATAAVCLLFIQGYSIYENYGNIKEFNATHAALEYSKSIGGTPALDRRVQDVNDTISDVKQKWRCVAYPGNGFVSASIFGFQAEVGPNNTRSIRKFNTMAQCIDFTFSDVINIDIYNPCVAPNINNVECQFLKSVL</sequence>
<organism>
    <name type="scientific">Camelpox virus (strain CMS)</name>
    <dbReference type="NCBI Taxonomy" id="203172"/>
    <lineage>
        <taxon>Viruses</taxon>
        <taxon>Varidnaviria</taxon>
        <taxon>Bamfordvirae</taxon>
        <taxon>Nucleocytoviricota</taxon>
        <taxon>Pokkesviricetes</taxon>
        <taxon>Chitovirales</taxon>
        <taxon>Poxviridae</taxon>
        <taxon>Chordopoxvirinae</taxon>
        <taxon>Orthopoxvirus</taxon>
        <taxon>Camelpox virus</taxon>
    </lineage>
</organism>
<accession>P68558</accession>
<accession>Q8V2M7</accession>
<keyword id="KW-1015">Disulfide bond</keyword>
<keyword id="KW-1168">Fusion of virus membrane with host membrane</keyword>
<keyword id="KW-0426">Late protein</keyword>
<keyword id="KW-0472">Membrane</keyword>
<keyword id="KW-0597">Phosphoprotein</keyword>
<keyword id="KW-1185">Reference proteome</keyword>
<keyword id="KW-0735">Signal-anchor</keyword>
<keyword id="KW-0812">Transmembrane</keyword>
<keyword id="KW-1133">Transmembrane helix</keyword>
<keyword id="KW-0261">Viral envelope protein</keyword>
<keyword id="KW-1162">Viral penetration into host cytoplasm</keyword>
<keyword id="KW-0946">Virion</keyword>
<keyword id="KW-1160">Virus entry into host cell</keyword>
<feature type="chain" id="PRO_0000099286" description="Envelope protein OPG155">
    <location>
        <begin position="1"/>
        <end position="146"/>
    </location>
</feature>
<feature type="transmembrane region" description="Helical; Signal-anchor for type II membrane protein" evidence="2">
    <location>
        <begin position="1"/>
        <end position="21"/>
    </location>
</feature>
<feature type="topological domain" description="Virion surface" evidence="2">
    <location>
        <begin position="22"/>
        <end position="146"/>
    </location>
</feature>
<evidence type="ECO:0000250" key="1">
    <source>
        <dbReference type="UniProtKB" id="P68633"/>
    </source>
</evidence>
<evidence type="ECO:0000255" key="2"/>
<evidence type="ECO:0000305" key="3"/>
<name>PG155_CAMPS</name>
<dbReference type="EMBL" id="AY009089">
    <property type="protein sequence ID" value="AAG37639.1"/>
    <property type="molecule type" value="Genomic_DNA"/>
</dbReference>
<dbReference type="SMR" id="P68558"/>
<dbReference type="Proteomes" id="UP000107153">
    <property type="component" value="Genome"/>
</dbReference>
<dbReference type="GO" id="GO:0016020">
    <property type="term" value="C:membrane"/>
    <property type="evidence" value="ECO:0007669"/>
    <property type="project" value="UniProtKB-KW"/>
</dbReference>
<dbReference type="GO" id="GO:0019031">
    <property type="term" value="C:viral envelope"/>
    <property type="evidence" value="ECO:0007669"/>
    <property type="project" value="UniProtKB-KW"/>
</dbReference>
<dbReference type="GO" id="GO:0055036">
    <property type="term" value="C:virion membrane"/>
    <property type="evidence" value="ECO:0007669"/>
    <property type="project" value="UniProtKB-SubCell"/>
</dbReference>
<dbReference type="GO" id="GO:0039663">
    <property type="term" value="P:membrane fusion involved in viral entry into host cell"/>
    <property type="evidence" value="ECO:0007669"/>
    <property type="project" value="UniProtKB-KW"/>
</dbReference>
<dbReference type="GO" id="GO:0046718">
    <property type="term" value="P:symbiont entry into host cell"/>
    <property type="evidence" value="ECO:0007669"/>
    <property type="project" value="UniProtKB-KW"/>
</dbReference>
<dbReference type="InterPro" id="IPR007664">
    <property type="entry name" value="Poxvirus_A28"/>
</dbReference>
<dbReference type="Pfam" id="PF04584">
    <property type="entry name" value="Pox_A28"/>
    <property type="match status" value="1"/>
</dbReference>
<comment type="function">
    <text evidence="1">Envelope protein required for virus entry into host cell and for cell-cell fusion (syncytium formation).</text>
</comment>
<comment type="subunit">
    <text evidence="1">Part of a stable entry-fusion complex (EFC) which is at least composed of proteins OPG143, OPG147, OPG155, OPG086, OPG094, OPG107, OPG104, and OPG099. Formation of the viral membrane is necessary for the assembly of the complex. Interacts directly with protein OPG107.</text>
</comment>
<comment type="subcellular location">
    <subcellularLocation>
        <location evidence="1">Virion membrane</location>
        <topology evidence="1">Single-pass type III membrane protein</topology>
    </subcellularLocation>
    <text evidence="1">Component of the mature virion (MV) membrane.</text>
</comment>
<comment type="PTM">
    <text evidence="1">Contains two intramolecular disulfide bonds. They are created by the viral disulfide bond formation pathway, a poxvirus-specific pathway that operates on the cytoplasmic side of the MV membranes.</text>
</comment>
<comment type="similarity">
    <text evidence="3">Belongs to the orthopoxvirus OPG155 protein family.</text>
</comment>